<reference key="1">
    <citation type="submission" date="2006-08" db="UniProtKB">
        <title>Dermaseptins and phylloseptins from Phyllomedusa tarsius (Amphibia).</title>
        <authorList>
            <person name="Prates M.V."/>
            <person name="Jardim D.P."/>
            <person name="Silva L.P."/>
            <person name="Gordo M."/>
            <person name="Leite J.R.S.A."/>
            <person name="Figueredo R.C.R."/>
            <person name="Amaral A.C."/>
            <person name="Felipe M.S.S."/>
            <person name="Bloch C. Jr."/>
        </authorList>
    </citation>
    <scope>PROTEIN SEQUENCE</scope>
    <scope>FUNCTION</scope>
    <scope>SUBCELLULAR LOCATION</scope>
    <scope>TISSUE SPECIFICITY</scope>
    <scope>MASS SPECTROMETRY</scope>
    <scope>AMIDATION AT GLN-28</scope>
    <source>
        <tissue>Skin secretion</tissue>
    </source>
</reference>
<organism>
    <name type="scientific">Phyllomedusa tarsius</name>
    <name type="common">Brownbelly leaf frog</name>
    <name type="synonym">Phyllomedusa tarsia</name>
    <dbReference type="NCBI Taxonomy" id="306084"/>
    <lineage>
        <taxon>Eukaryota</taxon>
        <taxon>Metazoa</taxon>
        <taxon>Chordata</taxon>
        <taxon>Craniata</taxon>
        <taxon>Vertebrata</taxon>
        <taxon>Euteleostomi</taxon>
        <taxon>Amphibia</taxon>
        <taxon>Batrachia</taxon>
        <taxon>Anura</taxon>
        <taxon>Neobatrachia</taxon>
        <taxon>Hyloidea</taxon>
        <taxon>Hylidae</taxon>
        <taxon>Phyllomedusinae</taxon>
        <taxon>Phyllomedusa</taxon>
    </lineage>
</organism>
<protein>
    <recommendedName>
        <fullName evidence="5">Dermaseptin-2</fullName>
        <shortName evidence="5">DStar 02</shortName>
    </recommendedName>
</protein>
<name>DRS2_PHYTS</name>
<feature type="peptide" id="PRO_0000376034" description="Dermaseptin-2" evidence="4">
    <location>
        <begin position="1"/>
        <end position="28"/>
    </location>
</feature>
<feature type="modified residue" description="Glutamine amide" evidence="4">
    <location>
        <position position="28"/>
    </location>
</feature>
<comment type="function">
    <text evidence="1 2 4">Antimicrobial peptide with activity against the Gram-positive bacterium S.aureus, and the Gram-negative bacteria E.coli and P.aeruginosa (Ref.1). Probably acts by disturbing membrane functions with its amphipathic structure (By similarity). Has an activity of stimulation of insulin release, which may protect the species from being eaten by predators by causing fatal hypoglycemia (By similarity). Has hemolytic activity (60% hemolysis at 128 ug/ml) (Ref.1).</text>
</comment>
<comment type="subcellular location">
    <subcellularLocation>
        <location evidence="4">Secreted</location>
    </subcellularLocation>
</comment>
<comment type="tissue specificity">
    <text evidence="4">Expressed by the skin glands.</text>
</comment>
<comment type="mass spectrometry" mass="2996.67" error="0.1" method="MALDI" evidence="4"/>
<comment type="miscellaneous">
    <text evidence="6">The primary structure of this peptide is identical to that of Insulin-releasing peptide from Phyllomedusa trinitatis (AC C0HLC4), and Dermaseptin-B4 from Phyllomedusa bicolor (AC P81486).</text>
</comment>
<comment type="similarity">
    <text evidence="3">Belongs to the frog skin active peptide (FSAP) family. Dermaseptin subfamily.</text>
</comment>
<proteinExistence type="evidence at protein level"/>
<keyword id="KW-0027">Amidation</keyword>
<keyword id="KW-0878">Amphibian defense peptide</keyword>
<keyword id="KW-0044">Antibiotic</keyword>
<keyword id="KW-0929">Antimicrobial</keyword>
<keyword id="KW-0204">Cytolysis</keyword>
<keyword id="KW-0903">Direct protein sequencing</keyword>
<keyword id="KW-0354">Hemolysis</keyword>
<keyword id="KW-0964">Secreted</keyword>
<dbReference type="SMR" id="P84922"/>
<dbReference type="GO" id="GO:0005576">
    <property type="term" value="C:extracellular region"/>
    <property type="evidence" value="ECO:0007669"/>
    <property type="project" value="UniProtKB-SubCell"/>
</dbReference>
<dbReference type="GO" id="GO:0042742">
    <property type="term" value="P:defense response to bacterium"/>
    <property type="evidence" value="ECO:0007669"/>
    <property type="project" value="UniProtKB-KW"/>
</dbReference>
<dbReference type="GO" id="GO:0031640">
    <property type="term" value="P:killing of cells of another organism"/>
    <property type="evidence" value="ECO:0007669"/>
    <property type="project" value="UniProtKB-KW"/>
</dbReference>
<dbReference type="InterPro" id="IPR022731">
    <property type="entry name" value="Dermaseptin_dom"/>
</dbReference>
<dbReference type="Pfam" id="PF12121">
    <property type="entry name" value="DD_K"/>
    <property type="match status" value="1"/>
</dbReference>
<sequence length="28" mass="2999">ALWKDILKNVGKAAGKAVLNTVTDMVNQ</sequence>
<evidence type="ECO:0000250" key="1">
    <source>
        <dbReference type="UniProtKB" id="C0HLC4"/>
    </source>
</evidence>
<evidence type="ECO:0000250" key="2">
    <source>
        <dbReference type="UniProtKB" id="P81486"/>
    </source>
</evidence>
<evidence type="ECO:0000255" key="3"/>
<evidence type="ECO:0000269" key="4">
    <source ref="1"/>
</evidence>
<evidence type="ECO:0000303" key="5">
    <source ref="1"/>
</evidence>
<evidence type="ECO:0000305" key="6"/>
<accession>P84922</accession>